<name>EFG_BACCQ</name>
<organism>
    <name type="scientific">Bacillus cereus (strain Q1)</name>
    <dbReference type="NCBI Taxonomy" id="361100"/>
    <lineage>
        <taxon>Bacteria</taxon>
        <taxon>Bacillati</taxon>
        <taxon>Bacillota</taxon>
        <taxon>Bacilli</taxon>
        <taxon>Bacillales</taxon>
        <taxon>Bacillaceae</taxon>
        <taxon>Bacillus</taxon>
        <taxon>Bacillus cereus group</taxon>
    </lineage>
</organism>
<dbReference type="EMBL" id="CP000227">
    <property type="protein sequence ID" value="ACM10635.1"/>
    <property type="molecule type" value="Genomic_DNA"/>
</dbReference>
<dbReference type="SMR" id="B9IZJ1"/>
<dbReference type="KEGG" id="bcq:BCQ_0120"/>
<dbReference type="HOGENOM" id="CLU_002794_4_1_9"/>
<dbReference type="Proteomes" id="UP000000441">
    <property type="component" value="Chromosome"/>
</dbReference>
<dbReference type="GO" id="GO:0005737">
    <property type="term" value="C:cytoplasm"/>
    <property type="evidence" value="ECO:0007669"/>
    <property type="project" value="UniProtKB-SubCell"/>
</dbReference>
<dbReference type="GO" id="GO:0005525">
    <property type="term" value="F:GTP binding"/>
    <property type="evidence" value="ECO:0007669"/>
    <property type="project" value="UniProtKB-UniRule"/>
</dbReference>
<dbReference type="GO" id="GO:0003924">
    <property type="term" value="F:GTPase activity"/>
    <property type="evidence" value="ECO:0007669"/>
    <property type="project" value="InterPro"/>
</dbReference>
<dbReference type="GO" id="GO:0003746">
    <property type="term" value="F:translation elongation factor activity"/>
    <property type="evidence" value="ECO:0007669"/>
    <property type="project" value="UniProtKB-UniRule"/>
</dbReference>
<dbReference type="GO" id="GO:0032790">
    <property type="term" value="P:ribosome disassembly"/>
    <property type="evidence" value="ECO:0007669"/>
    <property type="project" value="TreeGrafter"/>
</dbReference>
<dbReference type="CDD" id="cd01886">
    <property type="entry name" value="EF-G"/>
    <property type="match status" value="1"/>
</dbReference>
<dbReference type="CDD" id="cd16262">
    <property type="entry name" value="EFG_III"/>
    <property type="match status" value="1"/>
</dbReference>
<dbReference type="CDD" id="cd01434">
    <property type="entry name" value="EFG_mtEFG1_IV"/>
    <property type="match status" value="1"/>
</dbReference>
<dbReference type="CDD" id="cd03713">
    <property type="entry name" value="EFG_mtEFG_C"/>
    <property type="match status" value="1"/>
</dbReference>
<dbReference type="CDD" id="cd04088">
    <property type="entry name" value="EFG_mtEFG_II"/>
    <property type="match status" value="1"/>
</dbReference>
<dbReference type="FunFam" id="2.40.30.10:FF:000006">
    <property type="entry name" value="Elongation factor G"/>
    <property type="match status" value="1"/>
</dbReference>
<dbReference type="FunFam" id="3.30.230.10:FF:000003">
    <property type="entry name" value="Elongation factor G"/>
    <property type="match status" value="1"/>
</dbReference>
<dbReference type="FunFam" id="3.30.70.240:FF:000001">
    <property type="entry name" value="Elongation factor G"/>
    <property type="match status" value="1"/>
</dbReference>
<dbReference type="FunFam" id="3.30.70.870:FF:000001">
    <property type="entry name" value="Elongation factor G"/>
    <property type="match status" value="1"/>
</dbReference>
<dbReference type="FunFam" id="3.40.50.300:FF:000029">
    <property type="entry name" value="Elongation factor G"/>
    <property type="match status" value="1"/>
</dbReference>
<dbReference type="Gene3D" id="3.30.230.10">
    <property type="match status" value="1"/>
</dbReference>
<dbReference type="Gene3D" id="3.30.70.240">
    <property type="match status" value="1"/>
</dbReference>
<dbReference type="Gene3D" id="3.30.70.870">
    <property type="entry name" value="Elongation Factor G (Translational Gtpase), domain 3"/>
    <property type="match status" value="1"/>
</dbReference>
<dbReference type="Gene3D" id="3.40.50.300">
    <property type="entry name" value="P-loop containing nucleotide triphosphate hydrolases"/>
    <property type="match status" value="1"/>
</dbReference>
<dbReference type="Gene3D" id="2.40.30.10">
    <property type="entry name" value="Translation factors"/>
    <property type="match status" value="1"/>
</dbReference>
<dbReference type="HAMAP" id="MF_00054_B">
    <property type="entry name" value="EF_G_EF_2_B"/>
    <property type="match status" value="1"/>
</dbReference>
<dbReference type="InterPro" id="IPR041095">
    <property type="entry name" value="EFG_II"/>
</dbReference>
<dbReference type="InterPro" id="IPR009022">
    <property type="entry name" value="EFG_III"/>
</dbReference>
<dbReference type="InterPro" id="IPR035647">
    <property type="entry name" value="EFG_III/V"/>
</dbReference>
<dbReference type="InterPro" id="IPR047872">
    <property type="entry name" value="EFG_IV"/>
</dbReference>
<dbReference type="InterPro" id="IPR035649">
    <property type="entry name" value="EFG_V"/>
</dbReference>
<dbReference type="InterPro" id="IPR000640">
    <property type="entry name" value="EFG_V-like"/>
</dbReference>
<dbReference type="InterPro" id="IPR004161">
    <property type="entry name" value="EFTu-like_2"/>
</dbReference>
<dbReference type="InterPro" id="IPR031157">
    <property type="entry name" value="G_TR_CS"/>
</dbReference>
<dbReference type="InterPro" id="IPR027417">
    <property type="entry name" value="P-loop_NTPase"/>
</dbReference>
<dbReference type="InterPro" id="IPR020568">
    <property type="entry name" value="Ribosomal_Su5_D2-typ_SF"/>
</dbReference>
<dbReference type="InterPro" id="IPR014721">
    <property type="entry name" value="Ribsml_uS5_D2-typ_fold_subgr"/>
</dbReference>
<dbReference type="InterPro" id="IPR005225">
    <property type="entry name" value="Small_GTP-bd"/>
</dbReference>
<dbReference type="InterPro" id="IPR000795">
    <property type="entry name" value="T_Tr_GTP-bd_dom"/>
</dbReference>
<dbReference type="InterPro" id="IPR009000">
    <property type="entry name" value="Transl_B-barrel_sf"/>
</dbReference>
<dbReference type="InterPro" id="IPR004540">
    <property type="entry name" value="Transl_elong_EFG/EF2"/>
</dbReference>
<dbReference type="InterPro" id="IPR005517">
    <property type="entry name" value="Transl_elong_EFG/EF2_IV"/>
</dbReference>
<dbReference type="NCBIfam" id="TIGR00484">
    <property type="entry name" value="EF-G"/>
    <property type="match status" value="1"/>
</dbReference>
<dbReference type="NCBIfam" id="NF009379">
    <property type="entry name" value="PRK12740.1-3"/>
    <property type="match status" value="1"/>
</dbReference>
<dbReference type="NCBIfam" id="NF009381">
    <property type="entry name" value="PRK12740.1-5"/>
    <property type="match status" value="1"/>
</dbReference>
<dbReference type="NCBIfam" id="NF009891">
    <property type="entry name" value="PRK13351.1-1"/>
    <property type="match status" value="1"/>
</dbReference>
<dbReference type="NCBIfam" id="TIGR00231">
    <property type="entry name" value="small_GTP"/>
    <property type="match status" value="1"/>
</dbReference>
<dbReference type="PANTHER" id="PTHR43261:SF1">
    <property type="entry name" value="RIBOSOME-RELEASING FACTOR 2, MITOCHONDRIAL"/>
    <property type="match status" value="1"/>
</dbReference>
<dbReference type="PANTHER" id="PTHR43261">
    <property type="entry name" value="TRANSLATION ELONGATION FACTOR G-RELATED"/>
    <property type="match status" value="1"/>
</dbReference>
<dbReference type="Pfam" id="PF00679">
    <property type="entry name" value="EFG_C"/>
    <property type="match status" value="1"/>
</dbReference>
<dbReference type="Pfam" id="PF14492">
    <property type="entry name" value="EFG_III"/>
    <property type="match status" value="1"/>
</dbReference>
<dbReference type="Pfam" id="PF03764">
    <property type="entry name" value="EFG_IV"/>
    <property type="match status" value="1"/>
</dbReference>
<dbReference type="Pfam" id="PF00009">
    <property type="entry name" value="GTP_EFTU"/>
    <property type="match status" value="1"/>
</dbReference>
<dbReference type="Pfam" id="PF03144">
    <property type="entry name" value="GTP_EFTU_D2"/>
    <property type="match status" value="1"/>
</dbReference>
<dbReference type="PRINTS" id="PR00315">
    <property type="entry name" value="ELONGATNFCT"/>
</dbReference>
<dbReference type="SMART" id="SM00838">
    <property type="entry name" value="EFG_C"/>
    <property type="match status" value="1"/>
</dbReference>
<dbReference type="SMART" id="SM00889">
    <property type="entry name" value="EFG_IV"/>
    <property type="match status" value="1"/>
</dbReference>
<dbReference type="SUPFAM" id="SSF54980">
    <property type="entry name" value="EF-G C-terminal domain-like"/>
    <property type="match status" value="2"/>
</dbReference>
<dbReference type="SUPFAM" id="SSF52540">
    <property type="entry name" value="P-loop containing nucleoside triphosphate hydrolases"/>
    <property type="match status" value="1"/>
</dbReference>
<dbReference type="SUPFAM" id="SSF54211">
    <property type="entry name" value="Ribosomal protein S5 domain 2-like"/>
    <property type="match status" value="1"/>
</dbReference>
<dbReference type="SUPFAM" id="SSF50447">
    <property type="entry name" value="Translation proteins"/>
    <property type="match status" value="1"/>
</dbReference>
<dbReference type="PROSITE" id="PS00301">
    <property type="entry name" value="G_TR_1"/>
    <property type="match status" value="1"/>
</dbReference>
<dbReference type="PROSITE" id="PS51722">
    <property type="entry name" value="G_TR_2"/>
    <property type="match status" value="1"/>
</dbReference>
<keyword id="KW-0963">Cytoplasm</keyword>
<keyword id="KW-0251">Elongation factor</keyword>
<keyword id="KW-0342">GTP-binding</keyword>
<keyword id="KW-0547">Nucleotide-binding</keyword>
<keyword id="KW-0648">Protein biosynthesis</keyword>
<proteinExistence type="inferred from homology"/>
<accession>B9IZJ1</accession>
<comment type="function">
    <text evidence="1">Catalyzes the GTP-dependent ribosomal translocation step during translation elongation. During this step, the ribosome changes from the pre-translocational (PRE) to the post-translocational (POST) state as the newly formed A-site-bound peptidyl-tRNA and P-site-bound deacylated tRNA move to the P and E sites, respectively. Catalyzes the coordinated movement of the two tRNA molecules, the mRNA and conformational changes in the ribosome.</text>
</comment>
<comment type="subcellular location">
    <subcellularLocation>
        <location evidence="1">Cytoplasm</location>
    </subcellularLocation>
</comment>
<comment type="similarity">
    <text evidence="1">Belongs to the TRAFAC class translation factor GTPase superfamily. Classic translation factor GTPase family. EF-G/EF-2 subfamily.</text>
</comment>
<sequence length="692" mass="76370">MAREFSLENTRNIGIMAHIDAGKTTATERILYYTGRIHKIGETHEGASQMDWMEQEQERGITITSAATTAQWKGHRVNIIDTPGHVDFTVEVERSLRVLDGAVAVLDAQSGVEPQTETVWRQATTYGVPRIVFVNKMDKIGADFLYSVGTIHDRLQANAHPIQLPIGAEDEFNGIIDLVEECAYMYGNDLGTDIQRVEIPEEHKELAEEYRGKLIEAVAELDEEMMMKYLEGEEITVEELKAGIRKATTSVEFFPVICGSAFKNKGVQILLDAVIDYLPSPLDVPAIKGTLPDTDEEVERKSSDEEPFSALAFKIMTDPYVGKLTFFRVYSGVLNSGSYVKNSTKGKRERVGRILQMHANSREEISTVYAGDIAAAVGLKDTTTGDTLCDEKSLVILESMEFPEPVISVAIEPKSKADQDKMGTALSKLSEEDPTFRAHTDQETGQTIIAGMGELHLDIIVDRMRREFKVEANVGAPQVAYRETFRSAAKVEGKFARQSGGRGQFGHVWIEFEPNEEGKGFEFENKIVGGVVPREYIPAVGAGLEDALKNGVLAGYPVVDIKAALVDGSYHDVDSSEMAFKIAASMALKAAVSKCNPVILEPMMKVEVVIPEEYMGDIMGDVTSRRGRVEGMEARGNAQVVRAMVPLSEMFGYATSLRSNTQGRGTFSMVFDHYEEVPKSVSEEIIKKNKGE</sequence>
<protein>
    <recommendedName>
        <fullName evidence="1">Elongation factor G</fullName>
        <shortName evidence="1">EF-G</shortName>
    </recommendedName>
</protein>
<evidence type="ECO:0000255" key="1">
    <source>
        <dbReference type="HAMAP-Rule" id="MF_00054"/>
    </source>
</evidence>
<reference key="1">
    <citation type="journal article" date="2009" name="J. Bacteriol.">
        <title>Complete genome sequence of the extremophilic Bacillus cereus strain Q1 with industrial applications.</title>
        <authorList>
            <person name="Xiong Z."/>
            <person name="Jiang Y."/>
            <person name="Qi D."/>
            <person name="Lu H."/>
            <person name="Yang F."/>
            <person name="Yang J."/>
            <person name="Chen L."/>
            <person name="Sun L."/>
            <person name="Xu X."/>
            <person name="Xue Y."/>
            <person name="Zhu Y."/>
            <person name="Jin Q."/>
        </authorList>
    </citation>
    <scope>NUCLEOTIDE SEQUENCE [LARGE SCALE GENOMIC DNA]</scope>
    <source>
        <strain>Q1</strain>
    </source>
</reference>
<gene>
    <name evidence="1" type="primary">fusA</name>
    <name type="ordered locus">BCQ_0120</name>
</gene>
<feature type="chain" id="PRO_1000201439" description="Elongation factor G">
    <location>
        <begin position="1"/>
        <end position="692"/>
    </location>
</feature>
<feature type="domain" description="tr-type G">
    <location>
        <begin position="8"/>
        <end position="282"/>
    </location>
</feature>
<feature type="binding site" evidence="1">
    <location>
        <begin position="17"/>
        <end position="24"/>
    </location>
    <ligand>
        <name>GTP</name>
        <dbReference type="ChEBI" id="CHEBI:37565"/>
    </ligand>
</feature>
<feature type="binding site" evidence="1">
    <location>
        <begin position="81"/>
        <end position="85"/>
    </location>
    <ligand>
        <name>GTP</name>
        <dbReference type="ChEBI" id="CHEBI:37565"/>
    </ligand>
</feature>
<feature type="binding site" evidence="1">
    <location>
        <begin position="135"/>
        <end position="138"/>
    </location>
    <ligand>
        <name>GTP</name>
        <dbReference type="ChEBI" id="CHEBI:37565"/>
    </ligand>
</feature>